<accession>Q145F3</accession>
<organism>
    <name type="scientific">Paraburkholderia xenovorans (strain LB400)</name>
    <dbReference type="NCBI Taxonomy" id="266265"/>
    <lineage>
        <taxon>Bacteria</taxon>
        <taxon>Pseudomonadati</taxon>
        <taxon>Pseudomonadota</taxon>
        <taxon>Betaproteobacteria</taxon>
        <taxon>Burkholderiales</taxon>
        <taxon>Burkholderiaceae</taxon>
        <taxon>Paraburkholderia</taxon>
    </lineage>
</organism>
<dbReference type="EMBL" id="CP000270">
    <property type="protein sequence ID" value="ABE29036.1"/>
    <property type="molecule type" value="Genomic_DNA"/>
</dbReference>
<dbReference type="RefSeq" id="WP_007179202.1">
    <property type="nucleotide sequence ID" value="NZ_CP008760.1"/>
</dbReference>
<dbReference type="SMR" id="Q145F3"/>
<dbReference type="STRING" id="266265.Bxe_A3963"/>
<dbReference type="KEGG" id="bxb:DR64_1639"/>
<dbReference type="KEGG" id="bxe:Bxe_A3963"/>
<dbReference type="eggNOG" id="COG0576">
    <property type="taxonomic scope" value="Bacteria"/>
</dbReference>
<dbReference type="OrthoDB" id="9789811at2"/>
<dbReference type="Proteomes" id="UP000001817">
    <property type="component" value="Chromosome 1"/>
</dbReference>
<dbReference type="GO" id="GO:0005829">
    <property type="term" value="C:cytosol"/>
    <property type="evidence" value="ECO:0007669"/>
    <property type="project" value="TreeGrafter"/>
</dbReference>
<dbReference type="GO" id="GO:0000774">
    <property type="term" value="F:adenyl-nucleotide exchange factor activity"/>
    <property type="evidence" value="ECO:0007669"/>
    <property type="project" value="InterPro"/>
</dbReference>
<dbReference type="GO" id="GO:0042803">
    <property type="term" value="F:protein homodimerization activity"/>
    <property type="evidence" value="ECO:0007669"/>
    <property type="project" value="InterPro"/>
</dbReference>
<dbReference type="GO" id="GO:0051087">
    <property type="term" value="F:protein-folding chaperone binding"/>
    <property type="evidence" value="ECO:0007669"/>
    <property type="project" value="InterPro"/>
</dbReference>
<dbReference type="GO" id="GO:0051082">
    <property type="term" value="F:unfolded protein binding"/>
    <property type="evidence" value="ECO:0007669"/>
    <property type="project" value="TreeGrafter"/>
</dbReference>
<dbReference type="GO" id="GO:0006457">
    <property type="term" value="P:protein folding"/>
    <property type="evidence" value="ECO:0007669"/>
    <property type="project" value="InterPro"/>
</dbReference>
<dbReference type="CDD" id="cd00446">
    <property type="entry name" value="GrpE"/>
    <property type="match status" value="1"/>
</dbReference>
<dbReference type="FunFam" id="2.30.22.10:FF:000001">
    <property type="entry name" value="Protein GrpE"/>
    <property type="match status" value="1"/>
</dbReference>
<dbReference type="Gene3D" id="3.90.20.20">
    <property type="match status" value="1"/>
</dbReference>
<dbReference type="Gene3D" id="2.30.22.10">
    <property type="entry name" value="Head domain of nucleotide exchange factor GrpE"/>
    <property type="match status" value="1"/>
</dbReference>
<dbReference type="HAMAP" id="MF_01151">
    <property type="entry name" value="GrpE"/>
    <property type="match status" value="1"/>
</dbReference>
<dbReference type="InterPro" id="IPR000740">
    <property type="entry name" value="GrpE"/>
</dbReference>
<dbReference type="InterPro" id="IPR013805">
    <property type="entry name" value="GrpE_coiled_coil"/>
</dbReference>
<dbReference type="InterPro" id="IPR009012">
    <property type="entry name" value="GrpE_head"/>
</dbReference>
<dbReference type="NCBIfam" id="NF010737">
    <property type="entry name" value="PRK14139.1"/>
    <property type="match status" value="1"/>
</dbReference>
<dbReference type="NCBIfam" id="NF010738">
    <property type="entry name" value="PRK14140.1"/>
    <property type="match status" value="1"/>
</dbReference>
<dbReference type="NCBIfam" id="NF010748">
    <property type="entry name" value="PRK14150.1"/>
    <property type="match status" value="1"/>
</dbReference>
<dbReference type="PANTHER" id="PTHR21237">
    <property type="entry name" value="GRPE PROTEIN"/>
    <property type="match status" value="1"/>
</dbReference>
<dbReference type="PANTHER" id="PTHR21237:SF23">
    <property type="entry name" value="GRPE PROTEIN HOMOLOG, MITOCHONDRIAL"/>
    <property type="match status" value="1"/>
</dbReference>
<dbReference type="Pfam" id="PF01025">
    <property type="entry name" value="GrpE"/>
    <property type="match status" value="1"/>
</dbReference>
<dbReference type="PRINTS" id="PR00773">
    <property type="entry name" value="GRPEPROTEIN"/>
</dbReference>
<dbReference type="SUPFAM" id="SSF58014">
    <property type="entry name" value="Coiled-coil domain of nucleotide exchange factor GrpE"/>
    <property type="match status" value="1"/>
</dbReference>
<dbReference type="SUPFAM" id="SSF51064">
    <property type="entry name" value="Head domain of nucleotide exchange factor GrpE"/>
    <property type="match status" value="1"/>
</dbReference>
<dbReference type="PROSITE" id="PS01071">
    <property type="entry name" value="GRPE"/>
    <property type="match status" value="1"/>
</dbReference>
<reference key="1">
    <citation type="journal article" date="2006" name="Proc. Natl. Acad. Sci. U.S.A.">
        <title>Burkholderia xenovorans LB400 harbors a multi-replicon, 9.73-Mbp genome shaped for versatility.</title>
        <authorList>
            <person name="Chain P.S.G."/>
            <person name="Denef V.J."/>
            <person name="Konstantinidis K.T."/>
            <person name="Vergez L.M."/>
            <person name="Agullo L."/>
            <person name="Reyes V.L."/>
            <person name="Hauser L."/>
            <person name="Cordova M."/>
            <person name="Gomez L."/>
            <person name="Gonzalez M."/>
            <person name="Land M."/>
            <person name="Lao V."/>
            <person name="Larimer F."/>
            <person name="LiPuma J.J."/>
            <person name="Mahenthiralingam E."/>
            <person name="Malfatti S.A."/>
            <person name="Marx C.J."/>
            <person name="Parnell J.J."/>
            <person name="Ramette A."/>
            <person name="Richardson P."/>
            <person name="Seeger M."/>
            <person name="Smith D."/>
            <person name="Spilker T."/>
            <person name="Sul W.J."/>
            <person name="Tsoi T.V."/>
            <person name="Ulrich L.E."/>
            <person name="Zhulin I.B."/>
            <person name="Tiedje J.M."/>
        </authorList>
    </citation>
    <scope>NUCLEOTIDE SEQUENCE [LARGE SCALE GENOMIC DNA]</scope>
    <source>
        <strain>LB400</strain>
    </source>
</reference>
<keyword id="KW-0143">Chaperone</keyword>
<keyword id="KW-0963">Cytoplasm</keyword>
<keyword id="KW-1185">Reference proteome</keyword>
<keyword id="KW-0346">Stress response</keyword>
<gene>
    <name evidence="1" type="primary">grpE</name>
    <name type="ordered locus">Bxeno_A0498</name>
    <name type="ORF">Bxe_A3963</name>
</gene>
<protein>
    <recommendedName>
        <fullName evidence="1">Protein GrpE</fullName>
    </recommendedName>
    <alternativeName>
        <fullName evidence="1">HSP-70 cofactor</fullName>
    </alternativeName>
</protein>
<feature type="chain" id="PRO_1000053562" description="Protein GrpE">
    <location>
        <begin position="1"/>
        <end position="194"/>
    </location>
</feature>
<feature type="region of interest" description="Disordered" evidence="2">
    <location>
        <begin position="1"/>
        <end position="50"/>
    </location>
</feature>
<feature type="compositionally biased region" description="Polar residues" evidence="2">
    <location>
        <begin position="1"/>
        <end position="13"/>
    </location>
</feature>
<feature type="compositionally biased region" description="Low complexity" evidence="2">
    <location>
        <begin position="21"/>
        <end position="50"/>
    </location>
</feature>
<evidence type="ECO:0000255" key="1">
    <source>
        <dbReference type="HAMAP-Rule" id="MF_01151"/>
    </source>
</evidence>
<evidence type="ECO:0000256" key="2">
    <source>
        <dbReference type="SAM" id="MobiDB-lite"/>
    </source>
</evidence>
<sequence>MENTQENPTSQNPKPAEETARQAAEAAAPQQEAAANAATDSPASAEQAALAEAQAKIAELQESFLRAKAETENVRRRAQEDVAKAHKFAIESFAEHLLPVIDSLEAAVAHSSDDPAKVREGVELTLRQLTGALEKGRVVALNPVGEKFDPHRHQAISMVPADQEPNTVVAVLQKGFVIADRVLRPALVTVAAPK</sequence>
<proteinExistence type="inferred from homology"/>
<name>GRPE_PARXL</name>
<comment type="function">
    <text evidence="1">Participates actively in the response to hyperosmotic and heat shock by preventing the aggregation of stress-denatured proteins, in association with DnaK and GrpE. It is the nucleotide exchange factor for DnaK and may function as a thermosensor. Unfolded proteins bind initially to DnaJ; upon interaction with the DnaJ-bound protein, DnaK hydrolyzes its bound ATP, resulting in the formation of a stable complex. GrpE releases ADP from DnaK; ATP binding to DnaK triggers the release of the substrate protein, thus completing the reaction cycle. Several rounds of ATP-dependent interactions between DnaJ, DnaK and GrpE are required for fully efficient folding.</text>
</comment>
<comment type="subunit">
    <text evidence="1">Homodimer.</text>
</comment>
<comment type="subcellular location">
    <subcellularLocation>
        <location evidence="1">Cytoplasm</location>
    </subcellularLocation>
</comment>
<comment type="similarity">
    <text evidence="1">Belongs to the GrpE family.</text>
</comment>